<protein>
    <recommendedName>
        <fullName evidence="5">Vacuolar iron transporter homolog 4</fullName>
    </recommendedName>
    <alternativeName>
        <fullName evidence="5">Protein NODULIN-LIKE 4</fullName>
    </alternativeName>
</protein>
<proteinExistence type="inferred from homology"/>
<reference key="1">
    <citation type="journal article" date="2005" name="BMC Biol.">
        <title>The sequence of rice chromosomes 11 and 12, rich in disease resistance genes and recent gene duplications.</title>
        <authorList>
            <consortium name="The rice chromosomes 11 and 12 sequencing consortia"/>
        </authorList>
    </citation>
    <scope>NUCLEOTIDE SEQUENCE [LARGE SCALE GENOMIC DNA]</scope>
    <source>
        <strain>cv. Nipponbare</strain>
    </source>
</reference>
<reference key="2">
    <citation type="journal article" date="2005" name="Nature">
        <title>The map-based sequence of the rice genome.</title>
        <authorList>
            <consortium name="International rice genome sequencing project (IRGSP)"/>
        </authorList>
    </citation>
    <scope>NUCLEOTIDE SEQUENCE [LARGE SCALE GENOMIC DNA]</scope>
    <source>
        <strain>cv. Nipponbare</strain>
    </source>
</reference>
<reference key="3">
    <citation type="journal article" date="2013" name="Rice">
        <title>Improvement of the Oryza sativa Nipponbare reference genome using next generation sequence and optical map data.</title>
        <authorList>
            <person name="Kawahara Y."/>
            <person name="de la Bastide M."/>
            <person name="Hamilton J.P."/>
            <person name="Kanamori H."/>
            <person name="McCombie W.R."/>
            <person name="Ouyang S."/>
            <person name="Schwartz D.C."/>
            <person name="Tanaka T."/>
            <person name="Wu J."/>
            <person name="Zhou S."/>
            <person name="Childs K.L."/>
            <person name="Davidson R.M."/>
            <person name="Lin H."/>
            <person name="Quesada-Ocampo L."/>
            <person name="Vaillancourt B."/>
            <person name="Sakai H."/>
            <person name="Lee S.S."/>
            <person name="Kim J."/>
            <person name="Numa H."/>
            <person name="Itoh T."/>
            <person name="Buell C.R."/>
            <person name="Matsumoto T."/>
        </authorList>
    </citation>
    <scope>GENOME REANNOTATION</scope>
    <source>
        <strain>cv. Nipponbare</strain>
    </source>
</reference>
<comment type="function">
    <text evidence="1">Probable vacuolar iron transporter that may be involved in the regulation of iron distribution throughout the plant.</text>
</comment>
<comment type="catalytic activity">
    <reaction evidence="2">
        <text>Fe(2+)(in) = Fe(2+)(out)</text>
        <dbReference type="Rhea" id="RHEA:28486"/>
        <dbReference type="ChEBI" id="CHEBI:29033"/>
    </reaction>
    <physiologicalReaction direction="left-to-right" evidence="5">
        <dbReference type="Rhea" id="RHEA:28487"/>
    </physiologicalReaction>
</comment>
<comment type="subcellular location">
    <subcellularLocation>
        <location evidence="1">Vacuole membrane</location>
        <topology evidence="3">Multi-pass membrane protein</topology>
    </subcellularLocation>
</comment>
<comment type="similarity">
    <text evidence="5">Belongs to the CCC1 family.</text>
</comment>
<comment type="sequence caution" evidence="5">
    <conflict type="frameshift">
        <sequence resource="EMBL-CDS" id="AAX95090"/>
    </conflict>
</comment>
<comment type="sequence caution" evidence="5">
    <conflict type="frameshift">
        <sequence resource="EMBL-CDS" id="ABA91658"/>
    </conflict>
</comment>
<comment type="sequence caution" evidence="5">
    <conflict type="erroneous gene model prediction">
        <sequence resource="EMBL-CDS" id="BAT12806"/>
    </conflict>
</comment>
<accession>Q53PN2</accession>
<accession>A0A0P0XZN4</accession>
<dbReference type="EMBL" id="AC120533">
    <property type="protein sequence ID" value="AAX95090.1"/>
    <property type="status" value="ALT_FRAME"/>
    <property type="molecule type" value="Genomic_DNA"/>
</dbReference>
<dbReference type="EMBL" id="DP000010">
    <property type="protein sequence ID" value="ABA91658.1"/>
    <property type="status" value="ALT_FRAME"/>
    <property type="molecule type" value="Genomic_DNA"/>
</dbReference>
<dbReference type="EMBL" id="AP014967">
    <property type="protein sequence ID" value="BAT12806.1"/>
    <property type="status" value="ALT_SEQ"/>
    <property type="molecule type" value="Genomic_DNA"/>
</dbReference>
<dbReference type="SMR" id="Q53PN2"/>
<dbReference type="FunCoup" id="Q53PN2">
    <property type="interactions" value="2"/>
</dbReference>
<dbReference type="STRING" id="39947.Q53PN2"/>
<dbReference type="PaxDb" id="39947-Q53PN2"/>
<dbReference type="eggNOG" id="KOG4473">
    <property type="taxonomic scope" value="Eukaryota"/>
</dbReference>
<dbReference type="HOGENOM" id="CLU_038957_5_1_1"/>
<dbReference type="InParanoid" id="Q53PN2"/>
<dbReference type="Proteomes" id="UP000000763">
    <property type="component" value="Chromosome 11"/>
</dbReference>
<dbReference type="Proteomes" id="UP000059680">
    <property type="component" value="Chromosome 11"/>
</dbReference>
<dbReference type="GO" id="GO:0016020">
    <property type="term" value="C:membrane"/>
    <property type="evidence" value="ECO:0000318"/>
    <property type="project" value="GO_Central"/>
</dbReference>
<dbReference type="GO" id="GO:0005774">
    <property type="term" value="C:vacuolar membrane"/>
    <property type="evidence" value="ECO:0007669"/>
    <property type="project" value="UniProtKB-SubCell"/>
</dbReference>
<dbReference type="GO" id="GO:0005381">
    <property type="term" value="F:iron ion transmembrane transporter activity"/>
    <property type="evidence" value="ECO:0000318"/>
    <property type="project" value="GO_Central"/>
</dbReference>
<dbReference type="GO" id="GO:0005384">
    <property type="term" value="F:manganese ion transmembrane transporter activity"/>
    <property type="evidence" value="ECO:0000318"/>
    <property type="project" value="GO_Central"/>
</dbReference>
<dbReference type="GO" id="GO:0030026">
    <property type="term" value="P:intracellular manganese ion homeostasis"/>
    <property type="evidence" value="ECO:0000318"/>
    <property type="project" value="GO_Central"/>
</dbReference>
<dbReference type="InterPro" id="IPR008217">
    <property type="entry name" value="Ccc1_fam"/>
</dbReference>
<dbReference type="PANTHER" id="PTHR31851">
    <property type="entry name" value="FE(2+)/MN(2+) TRANSPORTER PCL1"/>
    <property type="match status" value="1"/>
</dbReference>
<dbReference type="Pfam" id="PF01988">
    <property type="entry name" value="VIT1"/>
    <property type="match status" value="2"/>
</dbReference>
<gene>
    <name evidence="7" type="ordered locus">Os11g0161900</name>
    <name evidence="6" type="ordered locus">LOC_Os11g06310</name>
</gene>
<organism>
    <name type="scientific">Oryza sativa subsp. japonica</name>
    <name type="common">Rice</name>
    <dbReference type="NCBI Taxonomy" id="39947"/>
    <lineage>
        <taxon>Eukaryota</taxon>
        <taxon>Viridiplantae</taxon>
        <taxon>Streptophyta</taxon>
        <taxon>Embryophyta</taxon>
        <taxon>Tracheophyta</taxon>
        <taxon>Spermatophyta</taxon>
        <taxon>Magnoliopsida</taxon>
        <taxon>Liliopsida</taxon>
        <taxon>Poales</taxon>
        <taxon>Poaceae</taxon>
        <taxon>BOP clade</taxon>
        <taxon>Oryzoideae</taxon>
        <taxon>Oryzeae</taxon>
        <taxon>Oryzinae</taxon>
        <taxon>Oryza</taxon>
        <taxon>Oryza sativa</taxon>
    </lineage>
</organism>
<name>VITH4_ORYSJ</name>
<evidence type="ECO:0000250" key="1">
    <source>
        <dbReference type="UniProtKB" id="Q6MWE5"/>
    </source>
</evidence>
<evidence type="ECO:0000250" key="2">
    <source>
        <dbReference type="UniProtKB" id="Q9LPU9"/>
    </source>
</evidence>
<evidence type="ECO:0000255" key="3"/>
<evidence type="ECO:0000256" key="4">
    <source>
        <dbReference type="SAM" id="MobiDB-lite"/>
    </source>
</evidence>
<evidence type="ECO:0000305" key="5"/>
<evidence type="ECO:0000312" key="6">
    <source>
        <dbReference type="EMBL" id="ABA91658.1"/>
    </source>
</evidence>
<evidence type="ECO:0000312" key="7">
    <source>
        <dbReference type="EMBL" id="BAT12806.1"/>
    </source>
</evidence>
<sequence>MAATNGDAELTVAEEAKEEEEATDDGGGGVSSQWLRAAVLGASDGLVSTAALMLGIGAARPADARAVLLSGLAGLVAGACSMAIGEYVSVHVQLDVELADLERRRRRGGPAPAGLGLHAAAAAVSRPGQAAAASALSFAAGAALPLLAAWFVAGAYRVRVVVVVATASLALAAFGAAGARLGRAPGGRAGLRVVVGGLLAMAATYGVMKLFRTHGV</sequence>
<feature type="chain" id="PRO_0000411015" description="Vacuolar iron transporter homolog 4">
    <location>
        <begin position="1"/>
        <end position="216"/>
    </location>
</feature>
<feature type="topological domain" description="Cytoplasmic" evidence="3">
    <location>
        <begin position="1"/>
        <end position="36"/>
    </location>
</feature>
<feature type="transmembrane region" description="Helical" evidence="3">
    <location>
        <begin position="37"/>
        <end position="57"/>
    </location>
</feature>
<feature type="topological domain" description="Vacuolar" evidence="3">
    <location>
        <begin position="58"/>
        <end position="65"/>
    </location>
</feature>
<feature type="transmembrane region" description="Helical" evidence="3">
    <location>
        <begin position="66"/>
        <end position="86"/>
    </location>
</feature>
<feature type="topological domain" description="Cytoplasmic" evidence="3">
    <location>
        <begin position="87"/>
        <end position="134"/>
    </location>
</feature>
<feature type="transmembrane region" description="Helical" evidence="3">
    <location>
        <begin position="135"/>
        <end position="155"/>
    </location>
</feature>
<feature type="topological domain" description="Vacuolar" evidence="3">
    <location>
        <begin position="156"/>
        <end position="157"/>
    </location>
</feature>
<feature type="transmembrane region" description="Helical" evidence="3">
    <location>
        <begin position="158"/>
        <end position="178"/>
    </location>
</feature>
<feature type="topological domain" description="Cytoplasmic" evidence="3">
    <location>
        <begin position="179"/>
        <end position="190"/>
    </location>
</feature>
<feature type="transmembrane region" description="Helical" evidence="3">
    <location>
        <begin position="191"/>
        <end position="211"/>
    </location>
</feature>
<feature type="topological domain" description="Vacuolar" evidence="3">
    <location>
        <begin position="212"/>
        <end position="216"/>
    </location>
</feature>
<feature type="region of interest" description="Disordered" evidence="4">
    <location>
        <begin position="1"/>
        <end position="29"/>
    </location>
</feature>
<keyword id="KW-0406">Ion transport</keyword>
<keyword id="KW-0408">Iron</keyword>
<keyword id="KW-0410">Iron transport</keyword>
<keyword id="KW-0472">Membrane</keyword>
<keyword id="KW-1185">Reference proteome</keyword>
<keyword id="KW-0812">Transmembrane</keyword>
<keyword id="KW-1133">Transmembrane helix</keyword>
<keyword id="KW-0813">Transport</keyword>
<keyword id="KW-0926">Vacuole</keyword>